<keyword id="KW-0131">Cell cycle</keyword>
<keyword id="KW-0132">Cell division</keyword>
<keyword id="KW-0133">Cell shape</keyword>
<keyword id="KW-0961">Cell wall biogenesis/degradation</keyword>
<keyword id="KW-0963">Cytoplasm</keyword>
<keyword id="KW-0274">FAD</keyword>
<keyword id="KW-0285">Flavoprotein</keyword>
<keyword id="KW-0521">NADP</keyword>
<keyword id="KW-0560">Oxidoreductase</keyword>
<keyword id="KW-0573">Peptidoglycan synthesis</keyword>
<accession>Q5X1S7</accession>
<proteinExistence type="inferred from homology"/>
<name>MURB_LEGPA</name>
<reference key="1">
    <citation type="journal article" date="2004" name="Nat. Genet.">
        <title>Evidence in the Legionella pneumophila genome for exploitation of host cell functions and high genome plasticity.</title>
        <authorList>
            <person name="Cazalet C."/>
            <person name="Rusniok C."/>
            <person name="Brueggemann H."/>
            <person name="Zidane N."/>
            <person name="Magnier A."/>
            <person name="Ma L."/>
            <person name="Tichit M."/>
            <person name="Jarraud S."/>
            <person name="Bouchier C."/>
            <person name="Vandenesch F."/>
            <person name="Kunst F."/>
            <person name="Etienne J."/>
            <person name="Glaser P."/>
            <person name="Buchrieser C."/>
        </authorList>
    </citation>
    <scope>NUCLEOTIDE SEQUENCE [LARGE SCALE GENOMIC DNA]</scope>
    <source>
        <strain>Paris</strain>
    </source>
</reference>
<evidence type="ECO:0000255" key="1">
    <source>
        <dbReference type="HAMAP-Rule" id="MF_00037"/>
    </source>
</evidence>
<gene>
    <name evidence="1" type="primary">murB</name>
    <name type="ordered locus">lpp2666</name>
</gene>
<organism>
    <name type="scientific">Legionella pneumophila (strain Paris)</name>
    <dbReference type="NCBI Taxonomy" id="297246"/>
    <lineage>
        <taxon>Bacteria</taxon>
        <taxon>Pseudomonadati</taxon>
        <taxon>Pseudomonadota</taxon>
        <taxon>Gammaproteobacteria</taxon>
        <taxon>Legionellales</taxon>
        <taxon>Legionellaceae</taxon>
        <taxon>Legionella</taxon>
    </lineage>
</organism>
<protein>
    <recommendedName>
        <fullName evidence="1">UDP-N-acetylenolpyruvoylglucosamine reductase</fullName>
        <ecNumber evidence="1">1.3.1.98</ecNumber>
    </recommendedName>
    <alternativeName>
        <fullName evidence="1">UDP-N-acetylmuramate dehydrogenase</fullName>
    </alternativeName>
</protein>
<comment type="function">
    <text evidence="1">Cell wall formation.</text>
</comment>
<comment type="catalytic activity">
    <reaction evidence="1">
        <text>UDP-N-acetyl-alpha-D-muramate + NADP(+) = UDP-N-acetyl-3-O-(1-carboxyvinyl)-alpha-D-glucosamine + NADPH + H(+)</text>
        <dbReference type="Rhea" id="RHEA:12248"/>
        <dbReference type="ChEBI" id="CHEBI:15378"/>
        <dbReference type="ChEBI" id="CHEBI:57783"/>
        <dbReference type="ChEBI" id="CHEBI:58349"/>
        <dbReference type="ChEBI" id="CHEBI:68483"/>
        <dbReference type="ChEBI" id="CHEBI:70757"/>
        <dbReference type="EC" id="1.3.1.98"/>
    </reaction>
</comment>
<comment type="cofactor">
    <cofactor evidence="1">
        <name>FAD</name>
        <dbReference type="ChEBI" id="CHEBI:57692"/>
    </cofactor>
</comment>
<comment type="pathway">
    <text evidence="1">Cell wall biogenesis; peptidoglycan biosynthesis.</text>
</comment>
<comment type="subcellular location">
    <subcellularLocation>
        <location evidence="1">Cytoplasm</location>
    </subcellularLocation>
</comment>
<comment type="similarity">
    <text evidence="1">Belongs to the MurB family.</text>
</comment>
<dbReference type="EC" id="1.3.1.98" evidence="1"/>
<dbReference type="EMBL" id="CR628336">
    <property type="protein sequence ID" value="CAH13819.1"/>
    <property type="molecule type" value="Genomic_DNA"/>
</dbReference>
<dbReference type="SMR" id="Q5X1S7"/>
<dbReference type="KEGG" id="lpp:lpp2666"/>
<dbReference type="LegioList" id="lpp2666"/>
<dbReference type="HOGENOM" id="CLU_035304_1_1_6"/>
<dbReference type="UniPathway" id="UPA00219"/>
<dbReference type="GO" id="GO:0005829">
    <property type="term" value="C:cytosol"/>
    <property type="evidence" value="ECO:0007669"/>
    <property type="project" value="TreeGrafter"/>
</dbReference>
<dbReference type="GO" id="GO:0071949">
    <property type="term" value="F:FAD binding"/>
    <property type="evidence" value="ECO:0007669"/>
    <property type="project" value="InterPro"/>
</dbReference>
<dbReference type="GO" id="GO:0008762">
    <property type="term" value="F:UDP-N-acetylmuramate dehydrogenase activity"/>
    <property type="evidence" value="ECO:0007669"/>
    <property type="project" value="UniProtKB-UniRule"/>
</dbReference>
<dbReference type="GO" id="GO:0051301">
    <property type="term" value="P:cell division"/>
    <property type="evidence" value="ECO:0007669"/>
    <property type="project" value="UniProtKB-KW"/>
</dbReference>
<dbReference type="GO" id="GO:0071555">
    <property type="term" value="P:cell wall organization"/>
    <property type="evidence" value="ECO:0007669"/>
    <property type="project" value="UniProtKB-KW"/>
</dbReference>
<dbReference type="GO" id="GO:0009252">
    <property type="term" value="P:peptidoglycan biosynthetic process"/>
    <property type="evidence" value="ECO:0007669"/>
    <property type="project" value="UniProtKB-UniRule"/>
</dbReference>
<dbReference type="GO" id="GO:0008360">
    <property type="term" value="P:regulation of cell shape"/>
    <property type="evidence" value="ECO:0007669"/>
    <property type="project" value="UniProtKB-KW"/>
</dbReference>
<dbReference type="Gene3D" id="3.30.465.10">
    <property type="match status" value="1"/>
</dbReference>
<dbReference type="Gene3D" id="3.90.78.10">
    <property type="entry name" value="UDP-N-acetylenolpyruvoylglucosamine reductase, C-terminal domain"/>
    <property type="match status" value="1"/>
</dbReference>
<dbReference type="Gene3D" id="3.30.43.10">
    <property type="entry name" value="Uridine Diphospho-n-acetylenolpyruvylglucosamine Reductase, domain 2"/>
    <property type="match status" value="1"/>
</dbReference>
<dbReference type="HAMAP" id="MF_00037">
    <property type="entry name" value="MurB"/>
    <property type="match status" value="1"/>
</dbReference>
<dbReference type="InterPro" id="IPR016166">
    <property type="entry name" value="FAD-bd_PCMH"/>
</dbReference>
<dbReference type="InterPro" id="IPR036318">
    <property type="entry name" value="FAD-bd_PCMH-like_sf"/>
</dbReference>
<dbReference type="InterPro" id="IPR016167">
    <property type="entry name" value="FAD-bd_PCMH_sub1"/>
</dbReference>
<dbReference type="InterPro" id="IPR016169">
    <property type="entry name" value="FAD-bd_PCMH_sub2"/>
</dbReference>
<dbReference type="InterPro" id="IPR003170">
    <property type="entry name" value="MurB"/>
</dbReference>
<dbReference type="InterPro" id="IPR011601">
    <property type="entry name" value="MurB_C"/>
</dbReference>
<dbReference type="InterPro" id="IPR036635">
    <property type="entry name" value="MurB_C_sf"/>
</dbReference>
<dbReference type="InterPro" id="IPR006094">
    <property type="entry name" value="Oxid_FAD_bind_N"/>
</dbReference>
<dbReference type="NCBIfam" id="TIGR00179">
    <property type="entry name" value="murB"/>
    <property type="match status" value="1"/>
</dbReference>
<dbReference type="NCBIfam" id="NF010480">
    <property type="entry name" value="PRK13905.1"/>
    <property type="match status" value="1"/>
</dbReference>
<dbReference type="PANTHER" id="PTHR21071">
    <property type="entry name" value="UDP-N-ACETYLENOLPYRUVOYLGLUCOSAMINE REDUCTASE"/>
    <property type="match status" value="1"/>
</dbReference>
<dbReference type="PANTHER" id="PTHR21071:SF4">
    <property type="entry name" value="UDP-N-ACETYLENOLPYRUVOYLGLUCOSAMINE REDUCTASE"/>
    <property type="match status" value="1"/>
</dbReference>
<dbReference type="Pfam" id="PF01565">
    <property type="entry name" value="FAD_binding_4"/>
    <property type="match status" value="1"/>
</dbReference>
<dbReference type="Pfam" id="PF02873">
    <property type="entry name" value="MurB_C"/>
    <property type="match status" value="1"/>
</dbReference>
<dbReference type="SUPFAM" id="SSF56176">
    <property type="entry name" value="FAD-binding/transporter-associated domain-like"/>
    <property type="match status" value="1"/>
</dbReference>
<dbReference type="SUPFAM" id="SSF56194">
    <property type="entry name" value="Uridine diphospho-N-Acetylenolpyruvylglucosamine reductase, MurB, C-terminal domain"/>
    <property type="match status" value="1"/>
</dbReference>
<dbReference type="PROSITE" id="PS51387">
    <property type="entry name" value="FAD_PCMH"/>
    <property type="match status" value="1"/>
</dbReference>
<feature type="chain" id="PRO_0000224692" description="UDP-N-acetylenolpyruvoylglucosamine reductase">
    <location>
        <begin position="1"/>
        <end position="303"/>
    </location>
</feature>
<feature type="domain" description="FAD-binding PCMH-type" evidence="1">
    <location>
        <begin position="27"/>
        <end position="191"/>
    </location>
</feature>
<feature type="active site" evidence="1">
    <location>
        <position position="171"/>
    </location>
</feature>
<feature type="active site" description="Proton donor" evidence="1">
    <location>
        <position position="220"/>
    </location>
</feature>
<feature type="active site" evidence="1">
    <location>
        <position position="291"/>
    </location>
</feature>
<sequence length="303" mass="33046">MDSSHVTESQGTLLFNEPLAEYTTWRVGGPAARLYKPANIDDLALFLSRLPFDEPLLWLGLGSNSLIRDGGFSGTVILTQGCLKEMTLLSDNCIRVEAGVSCASMARFSARNNLSEGEFWAGIPGTMGGALRMNAGCHGGETWQSVIEVQTINRRGEIRTRKPEEFEVAYRHVAGLGDEWFISAKLQLTPGNKETSLQLIKDLLAHRAKTQPTNEYNCGSVFRNPPGDFAARLIESCGLKGVSIGGAVVSEKHANFIINHQGTATAANIEALIHLVQTKVREQTSIELIREVHIIGDANVQTR</sequence>